<gene>
    <name evidence="1" type="primary">rps4e</name>
    <name type="ordered locus">Igni_1410</name>
</gene>
<feature type="chain" id="PRO_1000081335" description="Small ribosomal subunit protein eS4">
    <location>
        <begin position="1"/>
        <end position="255"/>
    </location>
</feature>
<feature type="domain" description="S4 RNA-binding" evidence="1">
    <location>
        <begin position="44"/>
        <end position="107"/>
    </location>
</feature>
<organism>
    <name type="scientific">Ignicoccus hospitalis (strain KIN4/I / DSM 18386 / JCM 14125)</name>
    <dbReference type="NCBI Taxonomy" id="453591"/>
    <lineage>
        <taxon>Archaea</taxon>
        <taxon>Thermoproteota</taxon>
        <taxon>Thermoprotei</taxon>
        <taxon>Desulfurococcales</taxon>
        <taxon>Desulfurococcaceae</taxon>
        <taxon>Ignicoccus</taxon>
    </lineage>
</organism>
<comment type="similarity">
    <text evidence="1">Belongs to the eukaryotic ribosomal protein eS4 family.</text>
</comment>
<name>RS4E_IGNH4</name>
<dbReference type="EMBL" id="CP000816">
    <property type="protein sequence ID" value="ABU82586.1"/>
    <property type="molecule type" value="Genomic_DNA"/>
</dbReference>
<dbReference type="RefSeq" id="WP_012123550.1">
    <property type="nucleotide sequence ID" value="NC_009776.1"/>
</dbReference>
<dbReference type="SMR" id="A8ACD4"/>
<dbReference type="STRING" id="453591.Igni_1410"/>
<dbReference type="GeneID" id="5561802"/>
<dbReference type="KEGG" id="iho:Igni_1410"/>
<dbReference type="eggNOG" id="arCOG04093">
    <property type="taxonomic scope" value="Archaea"/>
</dbReference>
<dbReference type="HOGENOM" id="CLU_060400_0_0_2"/>
<dbReference type="OrthoDB" id="372073at2157"/>
<dbReference type="PhylomeDB" id="A8ACD4"/>
<dbReference type="Proteomes" id="UP000000262">
    <property type="component" value="Chromosome"/>
</dbReference>
<dbReference type="GO" id="GO:0022627">
    <property type="term" value="C:cytosolic small ribosomal subunit"/>
    <property type="evidence" value="ECO:0007669"/>
    <property type="project" value="TreeGrafter"/>
</dbReference>
<dbReference type="GO" id="GO:0019843">
    <property type="term" value="F:rRNA binding"/>
    <property type="evidence" value="ECO:0007669"/>
    <property type="project" value="UniProtKB-KW"/>
</dbReference>
<dbReference type="GO" id="GO:0003735">
    <property type="term" value="F:structural constituent of ribosome"/>
    <property type="evidence" value="ECO:0007669"/>
    <property type="project" value="InterPro"/>
</dbReference>
<dbReference type="GO" id="GO:0006412">
    <property type="term" value="P:translation"/>
    <property type="evidence" value="ECO:0007669"/>
    <property type="project" value="UniProtKB-UniRule"/>
</dbReference>
<dbReference type="CDD" id="cd06087">
    <property type="entry name" value="KOW_RPS4"/>
    <property type="match status" value="1"/>
</dbReference>
<dbReference type="CDD" id="cd00165">
    <property type="entry name" value="S4"/>
    <property type="match status" value="1"/>
</dbReference>
<dbReference type="FunFam" id="3.10.290.10:FF:000002">
    <property type="entry name" value="40S ribosomal protein S4"/>
    <property type="match status" value="1"/>
</dbReference>
<dbReference type="Gene3D" id="2.30.30.30">
    <property type="match status" value="1"/>
</dbReference>
<dbReference type="Gene3D" id="2.40.50.740">
    <property type="match status" value="1"/>
</dbReference>
<dbReference type="Gene3D" id="3.10.290.10">
    <property type="entry name" value="RNA-binding S4 domain"/>
    <property type="match status" value="1"/>
</dbReference>
<dbReference type="HAMAP" id="MF_00485">
    <property type="entry name" value="Ribosomal_eS4"/>
    <property type="match status" value="1"/>
</dbReference>
<dbReference type="InterPro" id="IPR014722">
    <property type="entry name" value="Rib_uL2_dom2"/>
</dbReference>
<dbReference type="InterPro" id="IPR000876">
    <property type="entry name" value="Ribosomal_eS4"/>
</dbReference>
<dbReference type="InterPro" id="IPR013845">
    <property type="entry name" value="Ribosomal_eS4_central_region"/>
</dbReference>
<dbReference type="InterPro" id="IPR038237">
    <property type="entry name" value="Ribosomal_eS4_central_sf"/>
</dbReference>
<dbReference type="InterPro" id="IPR041982">
    <property type="entry name" value="Ribosomal_eS4_KOW"/>
</dbReference>
<dbReference type="InterPro" id="IPR013843">
    <property type="entry name" value="Ribosomal_eS4_N"/>
</dbReference>
<dbReference type="InterPro" id="IPR018199">
    <property type="entry name" value="Ribosomal_eS4_N_CS"/>
</dbReference>
<dbReference type="InterPro" id="IPR002942">
    <property type="entry name" value="S4_RNA-bd"/>
</dbReference>
<dbReference type="InterPro" id="IPR036986">
    <property type="entry name" value="S4_RNA-bd_sf"/>
</dbReference>
<dbReference type="NCBIfam" id="NF003312">
    <property type="entry name" value="PRK04313.1"/>
    <property type="match status" value="1"/>
</dbReference>
<dbReference type="PANTHER" id="PTHR11581">
    <property type="entry name" value="30S/40S RIBOSOMAL PROTEIN S4"/>
    <property type="match status" value="1"/>
</dbReference>
<dbReference type="PANTHER" id="PTHR11581:SF0">
    <property type="entry name" value="SMALL RIBOSOMAL SUBUNIT PROTEIN ES4"/>
    <property type="match status" value="1"/>
</dbReference>
<dbReference type="Pfam" id="PF00900">
    <property type="entry name" value="Ribosomal_S4e"/>
    <property type="match status" value="1"/>
</dbReference>
<dbReference type="Pfam" id="PF08071">
    <property type="entry name" value="RS4NT"/>
    <property type="match status" value="1"/>
</dbReference>
<dbReference type="Pfam" id="PF01479">
    <property type="entry name" value="S4"/>
    <property type="match status" value="1"/>
</dbReference>
<dbReference type="PIRSF" id="PIRSF002116">
    <property type="entry name" value="Ribosomal_S4"/>
    <property type="match status" value="1"/>
</dbReference>
<dbReference type="SMART" id="SM00363">
    <property type="entry name" value="S4"/>
    <property type="match status" value="1"/>
</dbReference>
<dbReference type="SUPFAM" id="SSF55174">
    <property type="entry name" value="Alpha-L RNA-binding motif"/>
    <property type="match status" value="1"/>
</dbReference>
<dbReference type="PROSITE" id="PS00528">
    <property type="entry name" value="RIBOSOMAL_S4E"/>
    <property type="match status" value="1"/>
</dbReference>
<dbReference type="PROSITE" id="PS50889">
    <property type="entry name" value="S4"/>
    <property type="match status" value="1"/>
</dbReference>
<protein>
    <recommendedName>
        <fullName evidence="1">Small ribosomal subunit protein eS4</fullName>
    </recommendedName>
    <alternativeName>
        <fullName evidence="2">30S ribosomal protein S4e</fullName>
    </alternativeName>
</protein>
<accession>A8ACD4</accession>
<keyword id="KW-1185">Reference proteome</keyword>
<keyword id="KW-0687">Ribonucleoprotein</keyword>
<keyword id="KW-0689">Ribosomal protein</keyword>
<keyword id="KW-0694">RNA-binding</keyword>
<keyword id="KW-0699">rRNA-binding</keyword>
<proteinExistence type="inferred from homology"/>
<sequence length="255" mass="28957">MARVGGGKRHLKRLAAPAFWPIHRKEAVWAVKPRPGPHPIEESIPLLILVRDVLGYAETSREARKLIAEGRIKVDGRVRKDYKFPVGAMDVIEIVGADEYYRMIPYPVKYLVPMRIDAEEAKKKICRIENKVTVKGGHVQLNLHDGRNVLIRVEDPRNPVEAQEYKTLGGLLITVPEQEILDYVPFEEGVIAIVKSGRNVGRVGRIEEIVKGMGRKKTLVKMRDVHDEVFYTVAEYVFPIGKEEPLIKLPEGAWK</sequence>
<evidence type="ECO:0000255" key="1">
    <source>
        <dbReference type="HAMAP-Rule" id="MF_00485"/>
    </source>
</evidence>
<evidence type="ECO:0000305" key="2"/>
<reference key="1">
    <citation type="journal article" date="2008" name="Genome Biol.">
        <title>A genomic analysis of the archaeal system Ignicoccus hospitalis-Nanoarchaeum equitans.</title>
        <authorList>
            <person name="Podar M."/>
            <person name="Anderson I."/>
            <person name="Makarova K.S."/>
            <person name="Elkins J.G."/>
            <person name="Ivanova N."/>
            <person name="Wall M.A."/>
            <person name="Lykidis A."/>
            <person name="Mavromatis K."/>
            <person name="Sun H."/>
            <person name="Hudson M.E."/>
            <person name="Chen W."/>
            <person name="Deciu C."/>
            <person name="Hutchison D."/>
            <person name="Eads J.R."/>
            <person name="Anderson A."/>
            <person name="Fernandes F."/>
            <person name="Szeto E."/>
            <person name="Lapidus A."/>
            <person name="Kyrpides N.C."/>
            <person name="Saier M.H. Jr."/>
            <person name="Richardson P.M."/>
            <person name="Rachel R."/>
            <person name="Huber H."/>
            <person name="Eisen J.A."/>
            <person name="Koonin E.V."/>
            <person name="Keller M."/>
            <person name="Stetter K.O."/>
        </authorList>
    </citation>
    <scope>NUCLEOTIDE SEQUENCE [LARGE SCALE GENOMIC DNA]</scope>
    <source>
        <strain>KIN4/I / DSM 18386 / JCM 14125</strain>
    </source>
</reference>